<gene>
    <name type="primary">IBD2</name>
    <name type="ordered locus">YNL164C</name>
    <name type="ORF">N1714</name>
</gene>
<feature type="chain" id="PRO_0000203413" description="Protein IBD2">
    <location>
        <begin position="1"/>
        <end position="351"/>
    </location>
</feature>
<feature type="region of interest" description="Disordered" evidence="1">
    <location>
        <begin position="1"/>
        <end position="20"/>
    </location>
</feature>
<feature type="region of interest" description="Disordered" evidence="1">
    <location>
        <begin position="223"/>
        <end position="249"/>
    </location>
</feature>
<feature type="compositionally biased region" description="Polar residues" evidence="1">
    <location>
        <begin position="1"/>
        <end position="14"/>
    </location>
</feature>
<feature type="compositionally biased region" description="Basic residues" evidence="1">
    <location>
        <begin position="232"/>
        <end position="249"/>
    </location>
</feature>
<feature type="modified residue" description="Phosphoserine" evidence="5">
    <location>
        <position position="100"/>
    </location>
</feature>
<feature type="modified residue" description="Phosphoserine" evidence="4 5">
    <location>
        <position position="106"/>
    </location>
</feature>
<feature type="modified residue" description="Phosphothreonine" evidence="5">
    <location>
        <position position="211"/>
    </location>
</feature>
<evidence type="ECO:0000256" key="1">
    <source>
        <dbReference type="SAM" id="MobiDB-lite"/>
    </source>
</evidence>
<evidence type="ECO:0000269" key="2">
    <source>
    </source>
</evidence>
<evidence type="ECO:0000305" key="3"/>
<evidence type="ECO:0007744" key="4">
    <source>
    </source>
</evidence>
<evidence type="ECO:0007744" key="5">
    <source>
    </source>
</evidence>
<reference key="1">
    <citation type="journal article" date="1996" name="Yeast">
        <title>The sequence of 36.8 kb from the left arm of chromosome XIV reveals 24 complete open reading frames: 18 correspond to new genes, one of which encodes a protein similar to the human myotonic dystrophy kinase.</title>
        <authorList>
            <person name="Nasr F."/>
            <person name="Becam A.-M."/>
            <person name="Herbert C.J."/>
        </authorList>
    </citation>
    <scope>NUCLEOTIDE SEQUENCE [GENOMIC DNA]</scope>
    <source>
        <strain>ATCC 96604 / S288c / FY1679</strain>
    </source>
</reference>
<reference key="2">
    <citation type="journal article" date="1997" name="Nature">
        <title>The nucleotide sequence of Saccharomyces cerevisiae chromosome XIV and its evolutionary implications.</title>
        <authorList>
            <person name="Philippsen P."/>
            <person name="Kleine K."/>
            <person name="Poehlmann R."/>
            <person name="Duesterhoeft A."/>
            <person name="Hamberg K."/>
            <person name="Hegemann J.H."/>
            <person name="Obermaier B."/>
            <person name="Urrestarazu L.A."/>
            <person name="Aert R."/>
            <person name="Albermann K."/>
            <person name="Altmann R."/>
            <person name="Andre B."/>
            <person name="Baladron V."/>
            <person name="Ballesta J.P.G."/>
            <person name="Becam A.-M."/>
            <person name="Beinhauer J.D."/>
            <person name="Boskovic J."/>
            <person name="Buitrago M.J."/>
            <person name="Bussereau F."/>
            <person name="Coster F."/>
            <person name="Crouzet M."/>
            <person name="D'Angelo M."/>
            <person name="Dal Pero F."/>
            <person name="De Antoni A."/>
            <person name="del Rey F."/>
            <person name="Doignon F."/>
            <person name="Domdey H."/>
            <person name="Dubois E."/>
            <person name="Fiedler T.A."/>
            <person name="Fleig U."/>
            <person name="Floeth M."/>
            <person name="Fritz C."/>
            <person name="Gaillardin C."/>
            <person name="Garcia-Cantalejo J.M."/>
            <person name="Glansdorff N."/>
            <person name="Goffeau A."/>
            <person name="Gueldener U."/>
            <person name="Herbert C.J."/>
            <person name="Heumann K."/>
            <person name="Heuss-Neitzel D."/>
            <person name="Hilbert H."/>
            <person name="Hinni K."/>
            <person name="Iraqui Houssaini I."/>
            <person name="Jacquet M."/>
            <person name="Jimenez A."/>
            <person name="Jonniaux J.-L."/>
            <person name="Karpfinger-Hartl L."/>
            <person name="Lanfranchi G."/>
            <person name="Lepingle A."/>
            <person name="Levesque H."/>
            <person name="Lyck R."/>
            <person name="Maftahi M."/>
            <person name="Mallet L."/>
            <person name="Maurer C.T.C."/>
            <person name="Messenguy F."/>
            <person name="Mewes H.-W."/>
            <person name="Moestl D."/>
            <person name="Nasr F."/>
            <person name="Nicaud J.-M."/>
            <person name="Niedenthal R.K."/>
            <person name="Pandolfo D."/>
            <person name="Pierard A."/>
            <person name="Piravandi E."/>
            <person name="Planta R.J."/>
            <person name="Pohl T.M."/>
            <person name="Purnelle B."/>
            <person name="Rebischung C."/>
            <person name="Remacha M.A."/>
            <person name="Revuelta J.L."/>
            <person name="Rinke M."/>
            <person name="Saiz J.E."/>
            <person name="Sartorello F."/>
            <person name="Scherens B."/>
            <person name="Sen-Gupta M."/>
            <person name="Soler-Mira A."/>
            <person name="Urbanus J.H.M."/>
            <person name="Valle G."/>
            <person name="Van Dyck L."/>
            <person name="Verhasselt P."/>
            <person name="Vierendeels F."/>
            <person name="Vissers S."/>
            <person name="Voet M."/>
            <person name="Volckaert G."/>
            <person name="Wach A."/>
            <person name="Wambutt R."/>
            <person name="Wedler H."/>
            <person name="Zollner A."/>
            <person name="Hani J."/>
        </authorList>
    </citation>
    <scope>NUCLEOTIDE SEQUENCE [LARGE SCALE GENOMIC DNA]</scope>
    <source>
        <strain>ATCC 204508 / S288c</strain>
    </source>
</reference>
<reference key="3">
    <citation type="journal article" date="2014" name="G3 (Bethesda)">
        <title>The reference genome sequence of Saccharomyces cerevisiae: Then and now.</title>
        <authorList>
            <person name="Engel S.R."/>
            <person name="Dietrich F.S."/>
            <person name="Fisk D.G."/>
            <person name="Binkley G."/>
            <person name="Balakrishnan R."/>
            <person name="Costanzo M.C."/>
            <person name="Dwight S.S."/>
            <person name="Hitz B.C."/>
            <person name="Karra K."/>
            <person name="Nash R.S."/>
            <person name="Weng S."/>
            <person name="Wong E.D."/>
            <person name="Lloyd P."/>
            <person name="Skrzypek M.S."/>
            <person name="Miyasato S.R."/>
            <person name="Simison M."/>
            <person name="Cherry J.M."/>
        </authorList>
    </citation>
    <scope>GENOME REANNOTATION</scope>
    <source>
        <strain>ATCC 204508 / S288c</strain>
    </source>
</reference>
<reference key="4">
    <citation type="journal article" date="2002" name="Genetics">
        <title>IBD2 encodes a novel component of the Bub2p-dependent spindle checkpoint in the budding yeast Saccharomyces cerevisiae.</title>
        <authorList>
            <person name="Hwang H.-S."/>
            <person name="Song K."/>
        </authorList>
    </citation>
    <scope>FUNCTION</scope>
    <scope>SUBCELLULAR LOCATION</scope>
    <scope>INTERACTION WITH BFA1</scope>
</reference>
<reference key="5">
    <citation type="journal article" date="2007" name="J. Proteome Res.">
        <title>Large-scale phosphorylation analysis of alpha-factor-arrested Saccharomyces cerevisiae.</title>
        <authorList>
            <person name="Li X."/>
            <person name="Gerber S.A."/>
            <person name="Rudner A.D."/>
            <person name="Beausoleil S.A."/>
            <person name="Haas W."/>
            <person name="Villen J."/>
            <person name="Elias J.E."/>
            <person name="Gygi S.P."/>
        </authorList>
    </citation>
    <scope>PHOSPHORYLATION [LARGE SCALE ANALYSIS] AT SER-106</scope>
    <scope>IDENTIFICATION BY MASS SPECTROMETRY [LARGE SCALE ANALYSIS]</scope>
    <source>
        <strain>ADR376</strain>
    </source>
</reference>
<reference key="6">
    <citation type="journal article" date="2008" name="Mol. Cell. Proteomics">
        <title>A multidimensional chromatography technology for in-depth phosphoproteome analysis.</title>
        <authorList>
            <person name="Albuquerque C.P."/>
            <person name="Smolka M.B."/>
            <person name="Payne S.H."/>
            <person name="Bafna V."/>
            <person name="Eng J."/>
            <person name="Zhou H."/>
        </authorList>
    </citation>
    <scope>IDENTIFICATION BY MASS SPECTROMETRY [LARGE SCALE ANALYSIS]</scope>
</reference>
<reference key="7">
    <citation type="journal article" date="2009" name="Science">
        <title>Global analysis of Cdk1 substrate phosphorylation sites provides insights into evolution.</title>
        <authorList>
            <person name="Holt L.J."/>
            <person name="Tuch B.B."/>
            <person name="Villen J."/>
            <person name="Johnson A.D."/>
            <person name="Gygi S.P."/>
            <person name="Morgan D.O."/>
        </authorList>
    </citation>
    <scope>PHOSPHORYLATION [LARGE SCALE ANALYSIS] AT SER-100; SER-106 AND THR-211</scope>
    <scope>IDENTIFICATION BY MASS SPECTROMETRY [LARGE SCALE ANALYSIS]</scope>
</reference>
<name>IBD2_YEAST</name>
<proteinExistence type="evidence at protein level"/>
<comment type="function">
    <text evidence="2">Part of a checkpoint which monitors spindle integrity and prevents premature exit from mitosis. This cell-cycle arrest depends upon inhibition of the G-protein TEM1 by the BFA1/BUB2 complex.</text>
</comment>
<comment type="subunit">
    <text evidence="2">Interacts with BFA1.</text>
</comment>
<comment type="subcellular location">
    <subcellularLocation>
        <location evidence="2">Cytoplasm</location>
        <location evidence="2">Cytoskeleton</location>
        <location evidence="2">Spindle pole</location>
    </subcellularLocation>
</comment>
<comment type="similarity">
    <text evidence="3">Belongs to the IBD2 family.</text>
</comment>
<dbReference type="EMBL" id="X92517">
    <property type="protein sequence ID" value="CAA63275.1"/>
    <property type="molecule type" value="Genomic_DNA"/>
</dbReference>
<dbReference type="EMBL" id="Z71440">
    <property type="protein sequence ID" value="CAA96051.1"/>
    <property type="molecule type" value="Genomic_DNA"/>
</dbReference>
<dbReference type="EMBL" id="BK006947">
    <property type="protein sequence ID" value="DAA10384.1"/>
    <property type="molecule type" value="Genomic_DNA"/>
</dbReference>
<dbReference type="PIR" id="S60963">
    <property type="entry name" value="S60963"/>
</dbReference>
<dbReference type="RefSeq" id="NP_014235.1">
    <property type="nucleotide sequence ID" value="NM_001183002.1"/>
</dbReference>
<dbReference type="BioGRID" id="35664">
    <property type="interactions" value="98"/>
</dbReference>
<dbReference type="DIP" id="DIP-1994N"/>
<dbReference type="FunCoup" id="P53892">
    <property type="interactions" value="41"/>
</dbReference>
<dbReference type="IntAct" id="P53892">
    <property type="interactions" value="4"/>
</dbReference>
<dbReference type="MINT" id="P53892"/>
<dbReference type="STRING" id="4932.YNL164C"/>
<dbReference type="iPTMnet" id="P53892"/>
<dbReference type="PaxDb" id="4932-YNL164C"/>
<dbReference type="PeptideAtlas" id="P53892"/>
<dbReference type="EnsemblFungi" id="YNL164C_mRNA">
    <property type="protein sequence ID" value="YNL164C"/>
    <property type="gene ID" value="YNL164C"/>
</dbReference>
<dbReference type="GeneID" id="855557"/>
<dbReference type="KEGG" id="sce:YNL164C"/>
<dbReference type="AGR" id="SGD:S000005108"/>
<dbReference type="SGD" id="S000005108">
    <property type="gene designation" value="IBD2"/>
</dbReference>
<dbReference type="VEuPathDB" id="FungiDB:YNL164C"/>
<dbReference type="eggNOG" id="ENOG502RXXW">
    <property type="taxonomic scope" value="Eukaryota"/>
</dbReference>
<dbReference type="HOGENOM" id="CLU_067888_0_0_1"/>
<dbReference type="InParanoid" id="P53892"/>
<dbReference type="OMA" id="PKNMIKW"/>
<dbReference type="OrthoDB" id="4057723at2759"/>
<dbReference type="BioCyc" id="YEAST:G3O-33180-MONOMER"/>
<dbReference type="BioGRID-ORCS" id="855557">
    <property type="hits" value="3 hits in 10 CRISPR screens"/>
</dbReference>
<dbReference type="PRO" id="PR:P53892"/>
<dbReference type="Proteomes" id="UP000002311">
    <property type="component" value="Chromosome XIV"/>
</dbReference>
<dbReference type="RNAct" id="P53892">
    <property type="molecule type" value="protein"/>
</dbReference>
<dbReference type="GO" id="GO:0005737">
    <property type="term" value="C:cytoplasm"/>
    <property type="evidence" value="ECO:0007669"/>
    <property type="project" value="UniProtKB-KW"/>
</dbReference>
<dbReference type="GO" id="GO:0005634">
    <property type="term" value="C:nucleus"/>
    <property type="evidence" value="ECO:0000303"/>
    <property type="project" value="SGD"/>
</dbReference>
<dbReference type="GO" id="GO:0000922">
    <property type="term" value="C:spindle pole"/>
    <property type="evidence" value="ECO:0007669"/>
    <property type="project" value="UniProtKB-SubCell"/>
</dbReference>
<dbReference type="GO" id="GO:0051301">
    <property type="term" value="P:cell division"/>
    <property type="evidence" value="ECO:0007669"/>
    <property type="project" value="UniProtKB-KW"/>
</dbReference>
<dbReference type="GO" id="GO:0007094">
    <property type="term" value="P:mitotic spindle assembly checkpoint signaling"/>
    <property type="evidence" value="ECO:0000315"/>
    <property type="project" value="SGD"/>
</dbReference>
<dbReference type="InterPro" id="IPR026231">
    <property type="entry name" value="IBD2"/>
</dbReference>
<dbReference type="PRINTS" id="PR02099">
    <property type="entry name" value="PROTEINIBD2"/>
</dbReference>
<accession>P53892</accession>
<accession>D6W118</accession>
<keyword id="KW-0131">Cell cycle</keyword>
<keyword id="KW-0132">Cell division</keyword>
<keyword id="KW-0963">Cytoplasm</keyword>
<keyword id="KW-0206">Cytoskeleton</keyword>
<keyword id="KW-0498">Mitosis</keyword>
<keyword id="KW-0597">Phosphoprotein</keyword>
<keyword id="KW-1185">Reference proteome</keyword>
<sequence length="351" mass="40016">MTPTNQSSGTTNASVEVLSEDGPMPINVMMQEGVKALTKILSNQLQDRQAFQNAPHAMQFVIRNGGKALSNARLEELKDALPKMDSLSLEDELAKIDGQSAYHIDSAEEKETFESKIGQIASRNSADFIIEEDLQNILDDDLKDSELNLDGEEAEIIFDYESQELDTPDGIGEKISQMIESVLPGGFGSEEQGGLRTVTNVEDLDVAEEVTDIDHDTVDAARLHGDGQHSISSRKHSRSKNSKKNGHVRRHDFYDESRDHKSCCPHHHYENLSKLRNYYYHDFEYISRTENRVPDFSVLVNESSPMCLFCEYYMVFGEPPRNMIKWYNRTFGYNRMPNPPRDEQDSRKRNR</sequence>
<protein>
    <recommendedName>
        <fullName>Protein IBD2</fullName>
    </recommendedName>
    <alternativeName>
        <fullName>Inhibition of bud division protein 2</fullName>
    </alternativeName>
</protein>
<organism>
    <name type="scientific">Saccharomyces cerevisiae (strain ATCC 204508 / S288c)</name>
    <name type="common">Baker's yeast</name>
    <dbReference type="NCBI Taxonomy" id="559292"/>
    <lineage>
        <taxon>Eukaryota</taxon>
        <taxon>Fungi</taxon>
        <taxon>Dikarya</taxon>
        <taxon>Ascomycota</taxon>
        <taxon>Saccharomycotina</taxon>
        <taxon>Saccharomycetes</taxon>
        <taxon>Saccharomycetales</taxon>
        <taxon>Saccharomycetaceae</taxon>
        <taxon>Saccharomyces</taxon>
    </lineage>
</organism>